<reference key="1">
    <citation type="journal article" date="2008" name="BMC Genomics">
        <title>Acidithiobacillus ferrooxidans metabolism: from genome sequence to industrial applications.</title>
        <authorList>
            <person name="Valdes J."/>
            <person name="Pedroso I."/>
            <person name="Quatrini R."/>
            <person name="Dodson R.J."/>
            <person name="Tettelin H."/>
            <person name="Blake R. II"/>
            <person name="Eisen J.A."/>
            <person name="Holmes D.S."/>
        </authorList>
    </citation>
    <scope>NUCLEOTIDE SEQUENCE [LARGE SCALE GENOMIC DNA]</scope>
    <source>
        <strain>ATCC 23270 / DSM 14882 / CIP 104768 / NCIMB 8455</strain>
    </source>
</reference>
<keyword id="KW-0963">Cytoplasm</keyword>
<keyword id="KW-0444">Lipid biosynthesis</keyword>
<keyword id="KW-0443">Lipid metabolism</keyword>
<keyword id="KW-0520">NAD</keyword>
<keyword id="KW-0521">NADP</keyword>
<keyword id="KW-0547">Nucleotide-binding</keyword>
<keyword id="KW-0560">Oxidoreductase</keyword>
<keyword id="KW-0594">Phospholipid biosynthesis</keyword>
<keyword id="KW-1208">Phospholipid metabolism</keyword>
<keyword id="KW-1185">Reference proteome</keyword>
<evidence type="ECO:0000255" key="1">
    <source>
        <dbReference type="HAMAP-Rule" id="MF_00394"/>
    </source>
</evidence>
<organism>
    <name type="scientific">Acidithiobacillus ferrooxidans (strain ATCC 23270 / DSM 14882 / CIP 104768 / NCIMB 8455)</name>
    <name type="common">Ferrobacillus ferrooxidans (strain ATCC 23270)</name>
    <dbReference type="NCBI Taxonomy" id="243159"/>
    <lineage>
        <taxon>Bacteria</taxon>
        <taxon>Pseudomonadati</taxon>
        <taxon>Pseudomonadota</taxon>
        <taxon>Acidithiobacillia</taxon>
        <taxon>Acidithiobacillales</taxon>
        <taxon>Acidithiobacillaceae</taxon>
        <taxon>Acidithiobacillus</taxon>
    </lineage>
</organism>
<protein>
    <recommendedName>
        <fullName evidence="1">Glycerol-3-phosphate dehydrogenase [NAD(P)+]</fullName>
        <ecNumber evidence="1">1.1.1.94</ecNumber>
    </recommendedName>
    <alternativeName>
        <fullName evidence="1">NAD(P)(+)-dependent glycerol-3-phosphate dehydrogenase</fullName>
    </alternativeName>
    <alternativeName>
        <fullName evidence="1">NAD(P)H-dependent dihydroxyacetone-phosphate reductase</fullName>
    </alternativeName>
</protein>
<name>GPDA_ACIF2</name>
<dbReference type="EC" id="1.1.1.94" evidence="1"/>
<dbReference type="EMBL" id="CP001219">
    <property type="protein sequence ID" value="ACK79805.1"/>
    <property type="molecule type" value="Genomic_DNA"/>
</dbReference>
<dbReference type="RefSeq" id="WP_012536992.1">
    <property type="nucleotide sequence ID" value="NC_011761.1"/>
</dbReference>
<dbReference type="SMR" id="B7J4Y4"/>
<dbReference type="STRING" id="243159.AFE_2126"/>
<dbReference type="PaxDb" id="243159-AFE_2126"/>
<dbReference type="GeneID" id="65281252"/>
<dbReference type="KEGG" id="afr:AFE_2126"/>
<dbReference type="eggNOG" id="COG0240">
    <property type="taxonomic scope" value="Bacteria"/>
</dbReference>
<dbReference type="HOGENOM" id="CLU_033449_0_2_6"/>
<dbReference type="UniPathway" id="UPA00940"/>
<dbReference type="Proteomes" id="UP000001362">
    <property type="component" value="Chromosome"/>
</dbReference>
<dbReference type="GO" id="GO:0005829">
    <property type="term" value="C:cytosol"/>
    <property type="evidence" value="ECO:0007669"/>
    <property type="project" value="TreeGrafter"/>
</dbReference>
<dbReference type="GO" id="GO:0047952">
    <property type="term" value="F:glycerol-3-phosphate dehydrogenase [NAD(P)+] activity"/>
    <property type="evidence" value="ECO:0007669"/>
    <property type="project" value="UniProtKB-UniRule"/>
</dbReference>
<dbReference type="GO" id="GO:0051287">
    <property type="term" value="F:NAD binding"/>
    <property type="evidence" value="ECO:0007669"/>
    <property type="project" value="InterPro"/>
</dbReference>
<dbReference type="GO" id="GO:0005975">
    <property type="term" value="P:carbohydrate metabolic process"/>
    <property type="evidence" value="ECO:0007669"/>
    <property type="project" value="InterPro"/>
</dbReference>
<dbReference type="GO" id="GO:0046167">
    <property type="term" value="P:glycerol-3-phosphate biosynthetic process"/>
    <property type="evidence" value="ECO:0007669"/>
    <property type="project" value="UniProtKB-UniRule"/>
</dbReference>
<dbReference type="GO" id="GO:0046168">
    <property type="term" value="P:glycerol-3-phosphate catabolic process"/>
    <property type="evidence" value="ECO:0007669"/>
    <property type="project" value="InterPro"/>
</dbReference>
<dbReference type="GO" id="GO:0006650">
    <property type="term" value="P:glycerophospholipid metabolic process"/>
    <property type="evidence" value="ECO:0007669"/>
    <property type="project" value="UniProtKB-UniRule"/>
</dbReference>
<dbReference type="GO" id="GO:0008654">
    <property type="term" value="P:phospholipid biosynthetic process"/>
    <property type="evidence" value="ECO:0007669"/>
    <property type="project" value="UniProtKB-KW"/>
</dbReference>
<dbReference type="FunFam" id="1.10.1040.10:FF:000001">
    <property type="entry name" value="Glycerol-3-phosphate dehydrogenase [NAD(P)+]"/>
    <property type="match status" value="1"/>
</dbReference>
<dbReference type="Gene3D" id="1.10.1040.10">
    <property type="entry name" value="N-(1-d-carboxylethyl)-l-norvaline Dehydrogenase, domain 2"/>
    <property type="match status" value="1"/>
</dbReference>
<dbReference type="Gene3D" id="3.40.50.720">
    <property type="entry name" value="NAD(P)-binding Rossmann-like Domain"/>
    <property type="match status" value="1"/>
</dbReference>
<dbReference type="HAMAP" id="MF_00394">
    <property type="entry name" value="NAD_Glyc3P_dehydrog"/>
    <property type="match status" value="1"/>
</dbReference>
<dbReference type="InterPro" id="IPR008927">
    <property type="entry name" value="6-PGluconate_DH-like_C_sf"/>
</dbReference>
<dbReference type="InterPro" id="IPR013328">
    <property type="entry name" value="6PGD_dom2"/>
</dbReference>
<dbReference type="InterPro" id="IPR006168">
    <property type="entry name" value="G3P_DH_NAD-dep"/>
</dbReference>
<dbReference type="InterPro" id="IPR006109">
    <property type="entry name" value="G3P_DH_NAD-dep_C"/>
</dbReference>
<dbReference type="InterPro" id="IPR011128">
    <property type="entry name" value="G3P_DH_NAD-dep_N"/>
</dbReference>
<dbReference type="InterPro" id="IPR036291">
    <property type="entry name" value="NAD(P)-bd_dom_sf"/>
</dbReference>
<dbReference type="NCBIfam" id="NF000940">
    <property type="entry name" value="PRK00094.1-2"/>
    <property type="match status" value="1"/>
</dbReference>
<dbReference type="NCBIfam" id="NF000942">
    <property type="entry name" value="PRK00094.1-4"/>
    <property type="match status" value="1"/>
</dbReference>
<dbReference type="PANTHER" id="PTHR11728">
    <property type="entry name" value="GLYCEROL-3-PHOSPHATE DEHYDROGENASE"/>
    <property type="match status" value="1"/>
</dbReference>
<dbReference type="PANTHER" id="PTHR11728:SF1">
    <property type="entry name" value="GLYCEROL-3-PHOSPHATE DEHYDROGENASE [NAD(+)] 2, CHLOROPLASTIC"/>
    <property type="match status" value="1"/>
</dbReference>
<dbReference type="Pfam" id="PF07479">
    <property type="entry name" value="NAD_Gly3P_dh_C"/>
    <property type="match status" value="1"/>
</dbReference>
<dbReference type="Pfam" id="PF01210">
    <property type="entry name" value="NAD_Gly3P_dh_N"/>
    <property type="match status" value="1"/>
</dbReference>
<dbReference type="PIRSF" id="PIRSF000114">
    <property type="entry name" value="Glycerol-3-P_dh"/>
    <property type="match status" value="1"/>
</dbReference>
<dbReference type="PRINTS" id="PR00077">
    <property type="entry name" value="GPDHDRGNASE"/>
</dbReference>
<dbReference type="SUPFAM" id="SSF48179">
    <property type="entry name" value="6-phosphogluconate dehydrogenase C-terminal domain-like"/>
    <property type="match status" value="1"/>
</dbReference>
<dbReference type="SUPFAM" id="SSF51735">
    <property type="entry name" value="NAD(P)-binding Rossmann-fold domains"/>
    <property type="match status" value="1"/>
</dbReference>
<gene>
    <name evidence="1" type="primary">gpsA</name>
    <name type="ordered locus">AFE_2126</name>
</gene>
<proteinExistence type="inferred from homology"/>
<accession>B7J4Y4</accession>
<feature type="chain" id="PRO_1000123111" description="Glycerol-3-phosphate dehydrogenase [NAD(P)+]">
    <location>
        <begin position="1"/>
        <end position="344"/>
    </location>
</feature>
<feature type="active site" description="Proton acceptor" evidence="1">
    <location>
        <position position="188"/>
    </location>
</feature>
<feature type="binding site" evidence="1">
    <location>
        <position position="11"/>
    </location>
    <ligand>
        <name>NADPH</name>
        <dbReference type="ChEBI" id="CHEBI:57783"/>
    </ligand>
</feature>
<feature type="binding site" evidence="1">
    <location>
        <position position="31"/>
    </location>
    <ligand>
        <name>NADPH</name>
        <dbReference type="ChEBI" id="CHEBI:57783"/>
    </ligand>
</feature>
<feature type="binding site" evidence="1">
    <location>
        <position position="32"/>
    </location>
    <ligand>
        <name>NADPH</name>
        <dbReference type="ChEBI" id="CHEBI:57783"/>
    </ligand>
</feature>
<feature type="binding site" evidence="1">
    <location>
        <position position="105"/>
    </location>
    <ligand>
        <name>NADPH</name>
        <dbReference type="ChEBI" id="CHEBI:57783"/>
    </ligand>
</feature>
<feature type="binding site" evidence="1">
    <location>
        <position position="105"/>
    </location>
    <ligand>
        <name>sn-glycerol 3-phosphate</name>
        <dbReference type="ChEBI" id="CHEBI:57597"/>
    </ligand>
</feature>
<feature type="binding site" evidence="1">
    <location>
        <position position="133"/>
    </location>
    <ligand>
        <name>sn-glycerol 3-phosphate</name>
        <dbReference type="ChEBI" id="CHEBI:57597"/>
    </ligand>
</feature>
<feature type="binding site" evidence="1">
    <location>
        <position position="135"/>
    </location>
    <ligand>
        <name>sn-glycerol 3-phosphate</name>
        <dbReference type="ChEBI" id="CHEBI:57597"/>
    </ligand>
</feature>
<feature type="binding site" evidence="1">
    <location>
        <position position="137"/>
    </location>
    <ligand>
        <name>NADPH</name>
        <dbReference type="ChEBI" id="CHEBI:57783"/>
    </ligand>
</feature>
<feature type="binding site" evidence="1">
    <location>
        <position position="188"/>
    </location>
    <ligand>
        <name>sn-glycerol 3-phosphate</name>
        <dbReference type="ChEBI" id="CHEBI:57597"/>
    </ligand>
</feature>
<feature type="binding site" evidence="1">
    <location>
        <position position="241"/>
    </location>
    <ligand>
        <name>sn-glycerol 3-phosphate</name>
        <dbReference type="ChEBI" id="CHEBI:57597"/>
    </ligand>
</feature>
<feature type="binding site" evidence="1">
    <location>
        <position position="251"/>
    </location>
    <ligand>
        <name>sn-glycerol 3-phosphate</name>
        <dbReference type="ChEBI" id="CHEBI:57597"/>
    </ligand>
</feature>
<feature type="binding site" evidence="1">
    <location>
        <position position="252"/>
    </location>
    <ligand>
        <name>NADPH</name>
        <dbReference type="ChEBI" id="CHEBI:57783"/>
    </ligand>
</feature>
<feature type="binding site" evidence="1">
    <location>
        <position position="252"/>
    </location>
    <ligand>
        <name>sn-glycerol 3-phosphate</name>
        <dbReference type="ChEBI" id="CHEBI:57597"/>
    </ligand>
</feature>
<feature type="binding site" evidence="1">
    <location>
        <position position="253"/>
    </location>
    <ligand>
        <name>sn-glycerol 3-phosphate</name>
        <dbReference type="ChEBI" id="CHEBI:57597"/>
    </ligand>
</feature>
<feature type="binding site" evidence="1">
    <location>
        <position position="278"/>
    </location>
    <ligand>
        <name>NADPH</name>
        <dbReference type="ChEBI" id="CHEBI:57783"/>
    </ligand>
</feature>
<sequence length="344" mass="36082">MRWAVLGGGHWGTALAVYLLRQRHMVQLWGRRAERLPCQPGRTDLFPVFPECARPEGLHCTVDLAAAVQGGEGIVLAVPSHALRGLLTHLLPCLPSTALFVLASKGLEVPSALRLDQVLREILPEAPLVVLSGPSFAHDLMLGKPLAMTAASTDPTYAQRVAEAFGSAQMRVYTSDDVAGVCLGGAIKNVLAIAAGISDGLGNGDSARAALITRGMAELHRLGTALGGRTETFMGLAGAGDLILTSCSDLSRNRRVGLGLGSGLSLEAVLRGIGEEAEGVRTAQALFQLAQSLGVDMPITEQVYRVLFEGAAPRAASDELMRRALRSELHVSDDGTPGGAARTE</sequence>
<comment type="function">
    <text evidence="1">Catalyzes the reduction of the glycolytic intermediate dihydroxyacetone phosphate (DHAP) to sn-glycerol 3-phosphate (G3P), the key precursor for phospholipid synthesis.</text>
</comment>
<comment type="catalytic activity">
    <reaction evidence="1">
        <text>sn-glycerol 3-phosphate + NAD(+) = dihydroxyacetone phosphate + NADH + H(+)</text>
        <dbReference type="Rhea" id="RHEA:11092"/>
        <dbReference type="ChEBI" id="CHEBI:15378"/>
        <dbReference type="ChEBI" id="CHEBI:57540"/>
        <dbReference type="ChEBI" id="CHEBI:57597"/>
        <dbReference type="ChEBI" id="CHEBI:57642"/>
        <dbReference type="ChEBI" id="CHEBI:57945"/>
        <dbReference type="EC" id="1.1.1.94"/>
    </reaction>
    <physiologicalReaction direction="right-to-left" evidence="1">
        <dbReference type="Rhea" id="RHEA:11094"/>
    </physiologicalReaction>
</comment>
<comment type="catalytic activity">
    <reaction evidence="1">
        <text>sn-glycerol 3-phosphate + NADP(+) = dihydroxyacetone phosphate + NADPH + H(+)</text>
        <dbReference type="Rhea" id="RHEA:11096"/>
        <dbReference type="ChEBI" id="CHEBI:15378"/>
        <dbReference type="ChEBI" id="CHEBI:57597"/>
        <dbReference type="ChEBI" id="CHEBI:57642"/>
        <dbReference type="ChEBI" id="CHEBI:57783"/>
        <dbReference type="ChEBI" id="CHEBI:58349"/>
        <dbReference type="EC" id="1.1.1.94"/>
    </reaction>
    <physiologicalReaction direction="right-to-left" evidence="1">
        <dbReference type="Rhea" id="RHEA:11098"/>
    </physiologicalReaction>
</comment>
<comment type="pathway">
    <text evidence="1">Membrane lipid metabolism; glycerophospholipid metabolism.</text>
</comment>
<comment type="subcellular location">
    <subcellularLocation>
        <location evidence="1">Cytoplasm</location>
    </subcellularLocation>
</comment>
<comment type="similarity">
    <text evidence="1">Belongs to the NAD-dependent glycerol-3-phosphate dehydrogenase family.</text>
</comment>